<gene>
    <name evidence="1" type="primary">pan2</name>
    <name type="synonym">prrIV1</name>
    <name type="ordered locus">VNG_2000G</name>
</gene>
<name>PAN2_HALSA</name>
<evidence type="ECO:0000255" key="1">
    <source>
        <dbReference type="HAMAP-Rule" id="MF_00553"/>
    </source>
</evidence>
<reference key="1">
    <citation type="journal article" date="2000" name="Proc. Natl. Acad. Sci. U.S.A.">
        <title>Genome sequence of Halobacterium species NRC-1.</title>
        <authorList>
            <person name="Ng W.V."/>
            <person name="Kennedy S.P."/>
            <person name="Mahairas G.G."/>
            <person name="Berquist B."/>
            <person name="Pan M."/>
            <person name="Shukla H.D."/>
            <person name="Lasky S.R."/>
            <person name="Baliga N.S."/>
            <person name="Thorsson V."/>
            <person name="Sbrogna J."/>
            <person name="Swartzell S."/>
            <person name="Weir D."/>
            <person name="Hall J."/>
            <person name="Dahl T.A."/>
            <person name="Welti R."/>
            <person name="Goo Y.A."/>
            <person name="Leithauser B."/>
            <person name="Keller K."/>
            <person name="Cruz R."/>
            <person name="Danson M.J."/>
            <person name="Hough D.W."/>
            <person name="Maddocks D.G."/>
            <person name="Jablonski P.E."/>
            <person name="Krebs M.P."/>
            <person name="Angevine C.M."/>
            <person name="Dale H."/>
            <person name="Isenbarger T.A."/>
            <person name="Peck R.F."/>
            <person name="Pohlschroder M."/>
            <person name="Spudich J.L."/>
            <person name="Jung K.-H."/>
            <person name="Alam M."/>
            <person name="Freitas T."/>
            <person name="Hou S."/>
            <person name="Daniels C.J."/>
            <person name="Dennis P.P."/>
            <person name="Omer A.D."/>
            <person name="Ebhardt H."/>
            <person name="Lowe T.M."/>
            <person name="Liang P."/>
            <person name="Riley M."/>
            <person name="Hood L."/>
            <person name="DasSarma S."/>
        </authorList>
    </citation>
    <scope>NUCLEOTIDE SEQUENCE [LARGE SCALE GENOMIC DNA]</scope>
    <source>
        <strain>ATCC 700922 / JCM 11081 / NRC-1</strain>
    </source>
</reference>
<keyword id="KW-0067">ATP-binding</keyword>
<keyword id="KW-0143">Chaperone</keyword>
<keyword id="KW-0175">Coiled coil</keyword>
<keyword id="KW-0963">Cytoplasm</keyword>
<keyword id="KW-0547">Nucleotide-binding</keyword>
<keyword id="KW-0647">Proteasome</keyword>
<keyword id="KW-1185">Reference proteome</keyword>
<feature type="chain" id="PRO_0000084740" description="Proteasome-activating nucleotidase 2">
    <location>
        <begin position="1"/>
        <end position="411"/>
    </location>
</feature>
<feature type="region of interest" description="Docks into pockets in the proteasome alpha-ring to cause gate opening" evidence="1">
    <location>
        <begin position="408"/>
        <end position="411"/>
    </location>
</feature>
<feature type="coiled-coil region" evidence="1">
    <location>
        <begin position="35"/>
        <end position="75"/>
    </location>
</feature>
<feature type="binding site" evidence="1">
    <location>
        <begin position="196"/>
        <end position="201"/>
    </location>
    <ligand>
        <name>ATP</name>
        <dbReference type="ChEBI" id="CHEBI:30616"/>
    </ligand>
</feature>
<feature type="binding site" evidence="1">
    <location>
        <position position="335"/>
    </location>
    <ligand>
        <name>ATP</name>
        <dbReference type="ChEBI" id="CHEBI:30616"/>
    </ligand>
</feature>
<organism>
    <name type="scientific">Halobacterium salinarum (strain ATCC 700922 / JCM 11081 / NRC-1)</name>
    <name type="common">Halobacterium halobium</name>
    <dbReference type="NCBI Taxonomy" id="64091"/>
    <lineage>
        <taxon>Archaea</taxon>
        <taxon>Methanobacteriati</taxon>
        <taxon>Methanobacteriota</taxon>
        <taxon>Stenosarchaea group</taxon>
        <taxon>Halobacteria</taxon>
        <taxon>Halobacteriales</taxon>
        <taxon>Halobacteriaceae</taxon>
        <taxon>Halobacterium</taxon>
        <taxon>Halobacterium salinarum NRC-34001</taxon>
    </lineage>
</organism>
<dbReference type="EMBL" id="AE004437">
    <property type="protein sequence ID" value="AAG20171.1"/>
    <property type="molecule type" value="Genomic_DNA"/>
</dbReference>
<dbReference type="PIR" id="G84350">
    <property type="entry name" value="G84350"/>
</dbReference>
<dbReference type="RefSeq" id="WP_010903472.1">
    <property type="nucleotide sequence ID" value="NC_002607.1"/>
</dbReference>
<dbReference type="SMR" id="Q9HNP9"/>
<dbReference type="FunCoup" id="Q9HNP9">
    <property type="interactions" value="106"/>
</dbReference>
<dbReference type="STRING" id="64091.VNG_2000G"/>
<dbReference type="PaxDb" id="64091-VNG_2000G"/>
<dbReference type="KEGG" id="hal:VNG_2000G"/>
<dbReference type="PATRIC" id="fig|64091.14.peg.1528"/>
<dbReference type="HOGENOM" id="CLU_000688_2_0_2"/>
<dbReference type="InParanoid" id="Q9HNP9"/>
<dbReference type="OrthoDB" id="77269at2157"/>
<dbReference type="PhylomeDB" id="Q9HNP9"/>
<dbReference type="Proteomes" id="UP000000554">
    <property type="component" value="Chromosome"/>
</dbReference>
<dbReference type="GO" id="GO:0005737">
    <property type="term" value="C:cytoplasm"/>
    <property type="evidence" value="ECO:0007669"/>
    <property type="project" value="UniProtKB-SubCell"/>
</dbReference>
<dbReference type="GO" id="GO:0008540">
    <property type="term" value="C:proteasome regulatory particle, base subcomplex"/>
    <property type="evidence" value="ECO:0000318"/>
    <property type="project" value="GO_Central"/>
</dbReference>
<dbReference type="GO" id="GO:0022623">
    <property type="term" value="C:proteasome-activating nucleotidase complex"/>
    <property type="evidence" value="ECO:0007669"/>
    <property type="project" value="UniProtKB-UniRule"/>
</dbReference>
<dbReference type="GO" id="GO:0005524">
    <property type="term" value="F:ATP binding"/>
    <property type="evidence" value="ECO:0007669"/>
    <property type="project" value="UniProtKB-UniRule"/>
</dbReference>
<dbReference type="GO" id="GO:0016887">
    <property type="term" value="F:ATP hydrolysis activity"/>
    <property type="evidence" value="ECO:0007669"/>
    <property type="project" value="UniProtKB-UniRule"/>
</dbReference>
<dbReference type="GO" id="GO:0036402">
    <property type="term" value="F:proteasome-activating activity"/>
    <property type="evidence" value="ECO:0000318"/>
    <property type="project" value="GO_Central"/>
</dbReference>
<dbReference type="GO" id="GO:0043161">
    <property type="term" value="P:proteasome-mediated ubiquitin-dependent protein catabolic process"/>
    <property type="evidence" value="ECO:0000318"/>
    <property type="project" value="GO_Central"/>
</dbReference>
<dbReference type="GO" id="GO:0043335">
    <property type="term" value="P:protein unfolding"/>
    <property type="evidence" value="ECO:0007669"/>
    <property type="project" value="UniProtKB-UniRule"/>
</dbReference>
<dbReference type="CDD" id="cd19502">
    <property type="entry name" value="RecA-like_PAN_like"/>
    <property type="match status" value="1"/>
</dbReference>
<dbReference type="FunFam" id="3.40.50.300:FF:000033">
    <property type="entry name" value="26S protease regulatory subunit 6B"/>
    <property type="match status" value="1"/>
</dbReference>
<dbReference type="Gene3D" id="1.10.8.60">
    <property type="match status" value="1"/>
</dbReference>
<dbReference type="Gene3D" id="2.40.50.140">
    <property type="entry name" value="Nucleic acid-binding proteins"/>
    <property type="match status" value="1"/>
</dbReference>
<dbReference type="Gene3D" id="3.40.50.300">
    <property type="entry name" value="P-loop containing nucleotide triphosphate hydrolases"/>
    <property type="match status" value="1"/>
</dbReference>
<dbReference type="HAMAP" id="MF_00553">
    <property type="entry name" value="PAN"/>
    <property type="match status" value="1"/>
</dbReference>
<dbReference type="InterPro" id="IPR050221">
    <property type="entry name" value="26S_Proteasome_ATPase"/>
</dbReference>
<dbReference type="InterPro" id="IPR003593">
    <property type="entry name" value="AAA+_ATPase"/>
</dbReference>
<dbReference type="InterPro" id="IPR041569">
    <property type="entry name" value="AAA_lid_3"/>
</dbReference>
<dbReference type="InterPro" id="IPR003959">
    <property type="entry name" value="ATPase_AAA_core"/>
</dbReference>
<dbReference type="InterPro" id="IPR003960">
    <property type="entry name" value="ATPase_AAA_CS"/>
</dbReference>
<dbReference type="InterPro" id="IPR012340">
    <property type="entry name" value="NA-bd_OB-fold"/>
</dbReference>
<dbReference type="InterPro" id="IPR023501">
    <property type="entry name" value="Nucleotidase_PAN"/>
</dbReference>
<dbReference type="InterPro" id="IPR027417">
    <property type="entry name" value="P-loop_NTPase"/>
</dbReference>
<dbReference type="InterPro" id="IPR032501">
    <property type="entry name" value="Prot_ATP_ID_OB_2nd"/>
</dbReference>
<dbReference type="NCBIfam" id="NF003069">
    <property type="entry name" value="PRK03992.1"/>
    <property type="match status" value="1"/>
</dbReference>
<dbReference type="NCBIfam" id="NF047747">
    <property type="entry name" value="PrtsmActNtasePan2"/>
    <property type="match status" value="1"/>
</dbReference>
<dbReference type="PANTHER" id="PTHR23073">
    <property type="entry name" value="26S PROTEASOME REGULATORY SUBUNIT"/>
    <property type="match status" value="1"/>
</dbReference>
<dbReference type="Pfam" id="PF00004">
    <property type="entry name" value="AAA"/>
    <property type="match status" value="1"/>
</dbReference>
<dbReference type="Pfam" id="PF17862">
    <property type="entry name" value="AAA_lid_3"/>
    <property type="match status" value="1"/>
</dbReference>
<dbReference type="Pfam" id="PF16450">
    <property type="entry name" value="Prot_ATP_ID_OB_C"/>
    <property type="match status" value="1"/>
</dbReference>
<dbReference type="SMART" id="SM00382">
    <property type="entry name" value="AAA"/>
    <property type="match status" value="1"/>
</dbReference>
<dbReference type="SUPFAM" id="SSF52540">
    <property type="entry name" value="P-loop containing nucleoside triphosphate hydrolases"/>
    <property type="match status" value="1"/>
</dbReference>
<dbReference type="PROSITE" id="PS00674">
    <property type="entry name" value="AAA"/>
    <property type="match status" value="1"/>
</dbReference>
<sequence>MSRSPSLPDRPTLDVDPESTPAERLNALQDHYVDIVAVNGELQAQLDDVEARREELREEVNRLQRENETLKTASLYLATVEDLPEDGSAVIKQHGNNQEVLTELSPRLADTLEVGDRVAINDSFSVQRVLDDETDARAQAMEVDESPSVTYADIGGLDDQLREVREAVEDPLVNPEKFDAVGVEPPSGVLLHGPPGTGKTMLAKAVANQTDASFIKMAGSELVRKFIGEGSRLVRDLFELAEQKDPAIIFIDEIDAVAAKRTDSKTSGDAEVQRTMMQLLSEMDGFDERGDIRIIAATNRFDMLDSAILRPGRFDRLIEVPNPNPDARERILEIHAGEMNVADSVDFSDLAADTAEFSGAQLASLATEAGMFAIRDDRDEVHRQDFDDAYEKLVAEGDTESSGPRYPSYIQ</sequence>
<comment type="function">
    <text evidence="1">ATPase which is responsible for recognizing, binding, unfolding and translocation of substrate proteins into the archaeal 20S proteasome core particle. Is essential for opening the gate of the 20S proteasome via an interaction with its C-terminus, thereby allowing substrate entry and access to the site of proteolysis. Thus, the C-termini of the proteasomal ATPase function like a 'key in a lock' to induce gate opening and therefore regulate proteolysis. Unfolding activity requires energy from ATP hydrolysis, whereas ATP binding alone promotes ATPase-20S proteasome association which triggers gate opening, and supports translocation of unfolded substrates.</text>
</comment>
<comment type="subunit">
    <text evidence="1">Homohexamer. The hexameric complex has a two-ring architecture resembling a top hat that caps the 20S proteasome core at one or both ends. Upon ATP-binding, the C-terminus of PAN interacts with the alpha-rings of the proteasome core by binding to the intersubunit pockets.</text>
</comment>
<comment type="subcellular location">
    <subcellularLocation>
        <location evidence="1">Cytoplasm</location>
    </subcellularLocation>
</comment>
<comment type="domain">
    <text evidence="1">Consists of three main regions, an N-terminal coiled-coil domain that may assist in substrate recognition, an interdomain involved in PAN hexamerization, and a C-terminal ATPase domain of the AAA type.</text>
</comment>
<comment type="similarity">
    <text evidence="1">Belongs to the AAA ATPase family.</text>
</comment>
<accession>Q9HNP9</accession>
<protein>
    <recommendedName>
        <fullName evidence="1">Proteasome-activating nucleotidase 2</fullName>
        <shortName evidence="1">PAN 2</shortName>
    </recommendedName>
    <alternativeName>
        <fullName evidence="1">Proteasomal ATPase 2</fullName>
    </alternativeName>
    <alternativeName>
        <fullName evidence="1">Proteasome regulatory ATPase 2</fullName>
    </alternativeName>
    <alternativeName>
        <fullName evidence="1">Proteasome regulatory particle 2</fullName>
    </alternativeName>
</protein>
<proteinExistence type="inferred from homology"/>